<feature type="chain" id="PRO_0000388555" description="tRNA/tmRNA (uracil-C(5))-methyltransferase">
    <location>
        <begin position="1"/>
        <end position="366"/>
    </location>
</feature>
<feature type="active site" description="Nucleophile" evidence="1">
    <location>
        <position position="324"/>
    </location>
</feature>
<feature type="active site" description="Proton acceptor" evidence="1">
    <location>
        <position position="358"/>
    </location>
</feature>
<feature type="binding site" evidence="1">
    <location>
        <position position="190"/>
    </location>
    <ligand>
        <name>S-adenosyl-L-methionine</name>
        <dbReference type="ChEBI" id="CHEBI:59789"/>
    </ligand>
</feature>
<feature type="binding site" evidence="1">
    <location>
        <position position="218"/>
    </location>
    <ligand>
        <name>S-adenosyl-L-methionine</name>
        <dbReference type="ChEBI" id="CHEBI:59789"/>
    </ligand>
</feature>
<feature type="binding site" evidence="1">
    <location>
        <position position="223"/>
    </location>
    <ligand>
        <name>S-adenosyl-L-methionine</name>
        <dbReference type="ChEBI" id="CHEBI:59789"/>
    </ligand>
</feature>
<feature type="binding site" evidence="1">
    <location>
        <position position="239"/>
    </location>
    <ligand>
        <name>S-adenosyl-L-methionine</name>
        <dbReference type="ChEBI" id="CHEBI:59789"/>
    </ligand>
</feature>
<feature type="binding site" evidence="1">
    <location>
        <position position="299"/>
    </location>
    <ligand>
        <name>S-adenosyl-L-methionine</name>
        <dbReference type="ChEBI" id="CHEBI:59789"/>
    </ligand>
</feature>
<name>TRMA_ECOBD</name>
<gene>
    <name evidence="1" type="primary">trmA</name>
    <name type="ordered locus">ECBD_4059</name>
    <name type="ordered locus">ECD_03850</name>
    <name type="ordered locus">B21_03799</name>
</gene>
<organism>
    <name type="scientific">Escherichia coli (strain B / BL21-DE3)</name>
    <dbReference type="NCBI Taxonomy" id="469008"/>
    <lineage>
        <taxon>Bacteria</taxon>
        <taxon>Pseudomonadati</taxon>
        <taxon>Pseudomonadota</taxon>
        <taxon>Gammaproteobacteria</taxon>
        <taxon>Enterobacterales</taxon>
        <taxon>Enterobacteriaceae</taxon>
        <taxon>Escherichia</taxon>
    </lineage>
</organism>
<accession>C5WBK5</accession>
<accession>C6EE44</accession>
<keyword id="KW-0489">Methyltransferase</keyword>
<keyword id="KW-0949">S-adenosyl-L-methionine</keyword>
<keyword id="KW-0808">Transferase</keyword>
<keyword id="KW-0819">tRNA processing</keyword>
<proteinExistence type="inferred from homology"/>
<dbReference type="EC" id="2.1.1.-" evidence="1"/>
<dbReference type="EC" id="2.1.1.35" evidence="1"/>
<dbReference type="EMBL" id="AM946981">
    <property type="protein sequence ID" value="CAQ34316.1"/>
    <property type="molecule type" value="Genomic_DNA"/>
</dbReference>
<dbReference type="EMBL" id="CP001665">
    <property type="protein sequence ID" value="ACT31042.1"/>
    <property type="molecule type" value="Genomic_DNA"/>
</dbReference>
<dbReference type="EMBL" id="CP001509">
    <property type="protein sequence ID" value="ACT45643.1"/>
    <property type="molecule type" value="Genomic_DNA"/>
</dbReference>
<dbReference type="RefSeq" id="WP_000187022.1">
    <property type="nucleotide sequence ID" value="NZ_JADXDS010000010.1"/>
</dbReference>
<dbReference type="SMR" id="C5WBK5"/>
<dbReference type="GeneID" id="75203203"/>
<dbReference type="KEGG" id="ebd:ECBD_4059"/>
<dbReference type="KEGG" id="ebe:B21_03799"/>
<dbReference type="KEGG" id="ebl:ECD_03850"/>
<dbReference type="PATRIC" id="fig|469008.15.peg.3935"/>
<dbReference type="eggNOG" id="COG2265">
    <property type="taxonomic scope" value="Bacteria"/>
</dbReference>
<dbReference type="HOGENOM" id="CLU_043022_0_0_6"/>
<dbReference type="GO" id="GO:0005829">
    <property type="term" value="C:cytosol"/>
    <property type="evidence" value="ECO:0007669"/>
    <property type="project" value="TreeGrafter"/>
</dbReference>
<dbReference type="GO" id="GO:0019843">
    <property type="term" value="F:rRNA binding"/>
    <property type="evidence" value="ECO:0007669"/>
    <property type="project" value="TreeGrafter"/>
</dbReference>
<dbReference type="GO" id="GO:0030697">
    <property type="term" value="F:tRNA (uracil(54)-C5)-methyltransferase activity, S-adenosyl methionine-dependent"/>
    <property type="evidence" value="ECO:0007669"/>
    <property type="project" value="UniProtKB-UniRule"/>
</dbReference>
<dbReference type="GO" id="GO:0000049">
    <property type="term" value="F:tRNA binding"/>
    <property type="evidence" value="ECO:0007669"/>
    <property type="project" value="TreeGrafter"/>
</dbReference>
<dbReference type="GO" id="GO:0030488">
    <property type="term" value="P:tRNA methylation"/>
    <property type="evidence" value="ECO:0007669"/>
    <property type="project" value="UniProtKB-UniRule"/>
</dbReference>
<dbReference type="CDD" id="cd02440">
    <property type="entry name" value="AdoMet_MTases"/>
    <property type="match status" value="1"/>
</dbReference>
<dbReference type="FunFam" id="2.40.50.1070:FF:000001">
    <property type="entry name" value="tRNA/tmRNA (uracil-C(5))-methyltransferase"/>
    <property type="match status" value="1"/>
</dbReference>
<dbReference type="FunFam" id="3.40.50.150:FF:000012">
    <property type="entry name" value="tRNA/tmRNA (uracil-C(5))-methyltransferase"/>
    <property type="match status" value="1"/>
</dbReference>
<dbReference type="Gene3D" id="2.40.50.1070">
    <property type="match status" value="1"/>
</dbReference>
<dbReference type="Gene3D" id="3.40.50.150">
    <property type="entry name" value="Vaccinia Virus protein VP39"/>
    <property type="match status" value="1"/>
</dbReference>
<dbReference type="HAMAP" id="MF_01011">
    <property type="entry name" value="RNA_methyltr_TrmA"/>
    <property type="match status" value="1"/>
</dbReference>
<dbReference type="InterPro" id="IPR030390">
    <property type="entry name" value="MeTrfase_TrmA_AS"/>
</dbReference>
<dbReference type="InterPro" id="IPR030391">
    <property type="entry name" value="MeTrfase_TrmA_CS"/>
</dbReference>
<dbReference type="InterPro" id="IPR029063">
    <property type="entry name" value="SAM-dependent_MTases_sf"/>
</dbReference>
<dbReference type="InterPro" id="IPR011869">
    <property type="entry name" value="TrmA_MeTrfase"/>
</dbReference>
<dbReference type="InterPro" id="IPR010280">
    <property type="entry name" value="U5_MeTrfase_fam"/>
</dbReference>
<dbReference type="NCBIfam" id="TIGR02143">
    <property type="entry name" value="trmA_only"/>
    <property type="match status" value="1"/>
</dbReference>
<dbReference type="PANTHER" id="PTHR47790">
    <property type="entry name" value="TRNA/TMRNA (URACIL-C(5))-METHYLTRANSFERASE"/>
    <property type="match status" value="1"/>
</dbReference>
<dbReference type="PANTHER" id="PTHR47790:SF2">
    <property type="entry name" value="TRNA_TMRNA (URACIL-C(5))-METHYLTRANSFERASE"/>
    <property type="match status" value="1"/>
</dbReference>
<dbReference type="Pfam" id="PF05958">
    <property type="entry name" value="tRNA_U5-meth_tr"/>
    <property type="match status" value="1"/>
</dbReference>
<dbReference type="SUPFAM" id="SSF53335">
    <property type="entry name" value="S-adenosyl-L-methionine-dependent methyltransferases"/>
    <property type="match status" value="1"/>
</dbReference>
<dbReference type="PROSITE" id="PS51687">
    <property type="entry name" value="SAM_MT_RNA_M5U"/>
    <property type="match status" value="1"/>
</dbReference>
<dbReference type="PROSITE" id="PS01230">
    <property type="entry name" value="TRMA_1"/>
    <property type="match status" value="1"/>
</dbReference>
<dbReference type="PROSITE" id="PS01231">
    <property type="entry name" value="TRMA_2"/>
    <property type="match status" value="1"/>
</dbReference>
<evidence type="ECO:0000255" key="1">
    <source>
        <dbReference type="HAMAP-Rule" id="MF_01011"/>
    </source>
</evidence>
<protein>
    <recommendedName>
        <fullName evidence="1">tRNA/tmRNA (uracil-C(5))-methyltransferase</fullName>
        <ecNumber evidence="1">2.1.1.-</ecNumber>
        <ecNumber evidence="1">2.1.1.35</ecNumber>
    </recommendedName>
    <alternativeName>
        <fullName evidence="1">tRNA (uracil(54)-C(5))-methyltransferase</fullName>
    </alternativeName>
    <alternativeName>
        <fullName evidence="1">tRNA(m5U54)-methyltransferase</fullName>
        <shortName evidence="1">RUMT</shortName>
    </alternativeName>
    <alternativeName>
        <fullName evidence="1">tmRNA (uracil(341)-C(5))-methyltransferase</fullName>
    </alternativeName>
</protein>
<sequence length="366" mass="41967">MTPEHLPTEQYEAQLAEKVVRLQSMMAPFSDLVPEVFRSPVSHYRMRAEFRIWHDGDDLYHIIFDQQTKSRIRVDSFPAASELINQLMTAMIAGVRNNPVLRHKLFQIDYLTTLSNQAVVSLLYHKKLDDEWRQEAEALRDALRAQNLNVHLIGRATKTKIELDQDYIDERLPVAGKEMIYRQVENSFTQPNAAMNIQMLEWALDVTKGSKGDLLELYCGNGNFSLALARNFDRVLATEIAKPSVAAAQYNIAANHIDNVQIIRMAAEEFTQAMNGVREFNRLQGIDLKSYQCETIFVDPPRSGLDSETEKMVQAYPRILYISCNPETLCKNLETLSQTHKVERLALFDQFPYTHHMECGVLLTAK</sequence>
<comment type="function">
    <text evidence="1">Dual-specificity methyltransferase that catalyzes the formation of 5-methyluridine at position 54 (m5U54) in all tRNAs, and that of position 341 (m5U341) in tmRNA (transfer-mRNA).</text>
</comment>
<comment type="catalytic activity">
    <reaction evidence="1">
        <text>uridine(54) in tRNA + S-adenosyl-L-methionine = 5-methyluridine(54) in tRNA + S-adenosyl-L-homocysteine + H(+)</text>
        <dbReference type="Rhea" id="RHEA:42712"/>
        <dbReference type="Rhea" id="RHEA-COMP:10167"/>
        <dbReference type="Rhea" id="RHEA-COMP:10193"/>
        <dbReference type="ChEBI" id="CHEBI:15378"/>
        <dbReference type="ChEBI" id="CHEBI:57856"/>
        <dbReference type="ChEBI" id="CHEBI:59789"/>
        <dbReference type="ChEBI" id="CHEBI:65315"/>
        <dbReference type="ChEBI" id="CHEBI:74447"/>
        <dbReference type="EC" id="2.1.1.35"/>
    </reaction>
</comment>
<comment type="catalytic activity">
    <reaction evidence="1">
        <text>uridine(341) in tmRNA + S-adenosyl-L-methionine = 5-methyluridine(341) in tmRNA + S-adenosyl-L-homocysteine + H(+)</text>
        <dbReference type="Rhea" id="RHEA:43612"/>
        <dbReference type="Rhea" id="RHEA-COMP:10630"/>
        <dbReference type="Rhea" id="RHEA-COMP:10631"/>
        <dbReference type="ChEBI" id="CHEBI:15378"/>
        <dbReference type="ChEBI" id="CHEBI:57856"/>
        <dbReference type="ChEBI" id="CHEBI:59789"/>
        <dbReference type="ChEBI" id="CHEBI:65315"/>
        <dbReference type="ChEBI" id="CHEBI:74447"/>
    </reaction>
</comment>
<comment type="similarity">
    <text evidence="1">Belongs to the class I-like SAM-binding methyltransferase superfamily. RNA M5U methyltransferase family. TrmA subfamily.</text>
</comment>
<reference key="1">
    <citation type="submission" date="2009-06" db="EMBL/GenBank/DDBJ databases">
        <title>Sequencing and gene expression analysis of Escherichia coli BL21.</title>
        <authorList>
            <person name="Leparc G."/>
            <person name="Striedner G."/>
            <person name="Bayer K."/>
            <person name="Kreil D."/>
            <person name="Krempl P.M."/>
        </authorList>
    </citation>
    <scope>NUCLEOTIDE SEQUENCE [LARGE SCALE GENOMIC DNA]</scope>
    <source>
        <strain>B / BL21-DE3</strain>
    </source>
</reference>
<reference key="2">
    <citation type="submission" date="2009-07" db="EMBL/GenBank/DDBJ databases">
        <title>Complete sequence of Escherichia coli BL21(DE3).</title>
        <authorList>
            <person name="Lucas S."/>
            <person name="Copeland A."/>
            <person name="Lapidus A."/>
            <person name="Glavina del Rio T."/>
            <person name="Dalin E."/>
            <person name="Tice H."/>
            <person name="Bruce D."/>
            <person name="Goodwin L."/>
            <person name="Pitluck S."/>
            <person name="LaButti K.M."/>
            <person name="Clum A."/>
            <person name="Larimer F."/>
            <person name="Land M."/>
            <person name="Hauser L."/>
            <person name="Kyrpides N."/>
            <person name="Anderson I."/>
            <person name="Sorek R."/>
            <person name="Rubin E."/>
        </authorList>
    </citation>
    <scope>NUCLEOTIDE SEQUENCE [LARGE SCALE GENOMIC DNA]</scope>
    <source>
        <strain>B / BL21-DE3</strain>
    </source>
</reference>
<reference key="3">
    <citation type="journal article" date="2009" name="J. Mol. Biol.">
        <title>Genome sequences of Escherichia coli B strains REL606 and BL21(DE3).</title>
        <authorList>
            <person name="Jeong H."/>
            <person name="Barbe V."/>
            <person name="Lee C.H."/>
            <person name="Vallenet D."/>
            <person name="Yu D.S."/>
            <person name="Choi S.H."/>
            <person name="Couloux A."/>
            <person name="Lee S.W."/>
            <person name="Yoon S.H."/>
            <person name="Cattolico L."/>
            <person name="Hur C.G."/>
            <person name="Park H.S."/>
            <person name="Segurens B."/>
            <person name="Kim S.C."/>
            <person name="Oh T.K."/>
            <person name="Lenski R.E."/>
            <person name="Studier F.W."/>
            <person name="Daegelen P."/>
            <person name="Kim J.F."/>
        </authorList>
    </citation>
    <scope>NUCLEOTIDE SEQUENCE [LARGE SCALE GENOMIC DNA]</scope>
    <source>
        <strain>B / BL21-DE3</strain>
    </source>
</reference>